<gene>
    <name evidence="3" type="primary">Nhsl2</name>
</gene>
<dbReference type="EMBL" id="AL807784">
    <property type="status" value="NOT_ANNOTATED_CDS"/>
    <property type="molecule type" value="Genomic_DNA"/>
</dbReference>
<dbReference type="EMBL" id="AL808026">
    <property type="status" value="NOT_ANNOTATED_CDS"/>
    <property type="molecule type" value="Genomic_DNA"/>
</dbReference>
<dbReference type="EMBL" id="CN666857">
    <property type="status" value="NOT_ANNOTATED_CDS"/>
    <property type="molecule type" value="mRNA"/>
</dbReference>
<dbReference type="CCDS" id="CCDS53156.1"/>
<dbReference type="RefSeq" id="NP_001157082.1">
    <property type="nucleotide sequence ID" value="NM_001163610.2"/>
</dbReference>
<dbReference type="BioGRID" id="785739">
    <property type="interactions" value="2"/>
</dbReference>
<dbReference type="FunCoup" id="B1AXH1">
    <property type="interactions" value="56"/>
</dbReference>
<dbReference type="IntAct" id="B1AXH1">
    <property type="interactions" value="2"/>
</dbReference>
<dbReference type="MINT" id="B1AXH1"/>
<dbReference type="STRING" id="10090.ENSMUSP00000098893"/>
<dbReference type="GlyGen" id="B1AXH1">
    <property type="glycosylation" value="7 sites, 1 N-linked glycan (1 site), 1 O-linked glycan (2 sites)"/>
</dbReference>
<dbReference type="iPTMnet" id="B1AXH1"/>
<dbReference type="PhosphoSitePlus" id="B1AXH1"/>
<dbReference type="jPOST" id="B1AXH1"/>
<dbReference type="PaxDb" id="10090-ENSMUSP00000098893"/>
<dbReference type="PeptideAtlas" id="B1AXH1"/>
<dbReference type="ProteomicsDB" id="253063"/>
<dbReference type="ProteomicsDB" id="327084"/>
<dbReference type="Antibodypedia" id="35138">
    <property type="antibodies" value="17 antibodies from 7 providers"/>
</dbReference>
<dbReference type="Ensembl" id="ENSMUST00000101339.8">
    <property type="protein sequence ID" value="ENSMUSP00000098893.5"/>
    <property type="gene ID" value="ENSMUSG00000079481.12"/>
</dbReference>
<dbReference type="GeneID" id="100042480"/>
<dbReference type="KEGG" id="mmu:100042480"/>
<dbReference type="AGR" id="MGI:3645090"/>
<dbReference type="CTD" id="340527"/>
<dbReference type="MGI" id="MGI:3645090">
    <property type="gene designation" value="Nhsl2"/>
</dbReference>
<dbReference type="VEuPathDB" id="HostDB:ENSMUSG00000079481"/>
<dbReference type="eggNOG" id="ENOG502QQ7S">
    <property type="taxonomic scope" value="Eukaryota"/>
</dbReference>
<dbReference type="GeneTree" id="ENSGT00950000182963"/>
<dbReference type="HOGENOM" id="CLU_009104_0_0_1"/>
<dbReference type="InParanoid" id="B1AXH1"/>
<dbReference type="OMA" id="KSTIHHV"/>
<dbReference type="OrthoDB" id="9906533at2759"/>
<dbReference type="TreeFam" id="TF333323"/>
<dbReference type="BioGRID-ORCS" id="100042480">
    <property type="hits" value="4 hits in 77 CRISPR screens"/>
</dbReference>
<dbReference type="ChiTaRS" id="Nhsl2">
    <property type="organism name" value="mouse"/>
</dbReference>
<dbReference type="PRO" id="PR:B1AXH1"/>
<dbReference type="Proteomes" id="UP000000589">
    <property type="component" value="Chromosome X"/>
</dbReference>
<dbReference type="RNAct" id="B1AXH1">
    <property type="molecule type" value="protein"/>
</dbReference>
<dbReference type="Bgee" id="ENSMUSG00000079481">
    <property type="expression patterns" value="Expressed in internal carotid artery and 204 other cell types or tissues"/>
</dbReference>
<dbReference type="ExpressionAtlas" id="B1AXH1">
    <property type="expression patterns" value="baseline and differential"/>
</dbReference>
<dbReference type="FunFam" id="1.20.5.340:FF:000042">
    <property type="entry name" value="NHS like 2"/>
    <property type="match status" value="1"/>
</dbReference>
<dbReference type="Gene3D" id="1.20.5.340">
    <property type="match status" value="1"/>
</dbReference>
<dbReference type="InterPro" id="IPR024845">
    <property type="entry name" value="NHS-like"/>
</dbReference>
<dbReference type="PANTHER" id="PTHR23039">
    <property type="entry name" value="NANCE-HORAN SYNDROME PROTEIN"/>
    <property type="match status" value="1"/>
</dbReference>
<dbReference type="PANTHER" id="PTHR23039:SF2">
    <property type="entry name" value="NHS-LIKE PROTEIN 2"/>
    <property type="match status" value="1"/>
</dbReference>
<dbReference type="Pfam" id="PF15273">
    <property type="entry name" value="NHS"/>
    <property type="match status" value="3"/>
</dbReference>
<proteinExistence type="evidence at protein level"/>
<accession>B1AXH1</accession>
<accession>E9Q0V6</accession>
<organism>
    <name type="scientific">Mus musculus</name>
    <name type="common">Mouse</name>
    <dbReference type="NCBI Taxonomy" id="10090"/>
    <lineage>
        <taxon>Eukaryota</taxon>
        <taxon>Metazoa</taxon>
        <taxon>Chordata</taxon>
        <taxon>Craniata</taxon>
        <taxon>Vertebrata</taxon>
        <taxon>Euteleostomi</taxon>
        <taxon>Mammalia</taxon>
        <taxon>Eutheria</taxon>
        <taxon>Euarchontoglires</taxon>
        <taxon>Glires</taxon>
        <taxon>Rodentia</taxon>
        <taxon>Myomorpha</taxon>
        <taxon>Muroidea</taxon>
        <taxon>Muridae</taxon>
        <taxon>Murinae</taxon>
        <taxon>Mus</taxon>
        <taxon>Mus</taxon>
    </lineage>
</organism>
<feature type="chain" id="PRO_0000341356" description="NHS-like protein 2">
    <location>
        <begin position="1"/>
        <end position="1219"/>
    </location>
</feature>
<feature type="region of interest" description="Disordered" evidence="1">
    <location>
        <begin position="162"/>
        <end position="181"/>
    </location>
</feature>
<feature type="region of interest" description="Disordered" evidence="1">
    <location>
        <begin position="288"/>
        <end position="321"/>
    </location>
</feature>
<feature type="region of interest" description="Disordered" evidence="1">
    <location>
        <begin position="336"/>
        <end position="364"/>
    </location>
</feature>
<feature type="region of interest" description="Disordered" evidence="1">
    <location>
        <begin position="400"/>
        <end position="423"/>
    </location>
</feature>
<feature type="region of interest" description="Disordered" evidence="1">
    <location>
        <begin position="474"/>
        <end position="591"/>
    </location>
</feature>
<feature type="region of interest" description="Disordered" evidence="1">
    <location>
        <begin position="669"/>
        <end position="741"/>
    </location>
</feature>
<feature type="region of interest" description="Disordered" evidence="1">
    <location>
        <begin position="854"/>
        <end position="938"/>
    </location>
</feature>
<feature type="region of interest" description="Disordered" evidence="1">
    <location>
        <begin position="979"/>
        <end position="1003"/>
    </location>
</feature>
<feature type="region of interest" description="Disordered" evidence="1">
    <location>
        <begin position="1033"/>
        <end position="1087"/>
    </location>
</feature>
<feature type="region of interest" description="Disordered" evidence="1">
    <location>
        <begin position="1121"/>
        <end position="1197"/>
    </location>
</feature>
<feature type="compositionally biased region" description="Polar residues" evidence="1">
    <location>
        <begin position="288"/>
        <end position="312"/>
    </location>
</feature>
<feature type="compositionally biased region" description="Basic and acidic residues" evidence="1">
    <location>
        <begin position="352"/>
        <end position="364"/>
    </location>
</feature>
<feature type="compositionally biased region" description="Polar residues" evidence="1">
    <location>
        <begin position="526"/>
        <end position="545"/>
    </location>
</feature>
<feature type="compositionally biased region" description="Basic residues" evidence="1">
    <location>
        <begin position="549"/>
        <end position="567"/>
    </location>
</feature>
<feature type="compositionally biased region" description="Low complexity" evidence="1">
    <location>
        <begin position="674"/>
        <end position="687"/>
    </location>
</feature>
<feature type="compositionally biased region" description="Polar residues" evidence="1">
    <location>
        <begin position="708"/>
        <end position="729"/>
    </location>
</feature>
<feature type="compositionally biased region" description="Polar residues" evidence="1">
    <location>
        <begin position="897"/>
        <end position="908"/>
    </location>
</feature>
<feature type="compositionally biased region" description="Basic and acidic residues" evidence="1">
    <location>
        <begin position="1076"/>
        <end position="1087"/>
    </location>
</feature>
<feature type="compositionally biased region" description="Polar residues" evidence="1">
    <location>
        <begin position="1131"/>
        <end position="1144"/>
    </location>
</feature>
<feature type="compositionally biased region" description="Low complexity" evidence="1">
    <location>
        <begin position="1145"/>
        <end position="1160"/>
    </location>
</feature>
<feature type="modified residue" description="Phosphoserine" evidence="4">
    <location>
        <position position="499"/>
    </location>
</feature>
<feature type="modified residue" description="Phosphoserine" evidence="4">
    <location>
        <position position="575"/>
    </location>
</feature>
<feature type="modified residue" description="Phosphoserine" evidence="4">
    <location>
        <position position="690"/>
    </location>
</feature>
<feature type="modified residue" description="Phosphoserine" evidence="4">
    <location>
        <position position="1048"/>
    </location>
</feature>
<feature type="modified residue" description="Phosphoserine" evidence="4">
    <location>
        <position position="1208"/>
    </location>
</feature>
<reference key="1">
    <citation type="journal article" date="2009" name="PLoS Biol.">
        <title>Lineage-specific biology revealed by a finished genome assembly of the mouse.</title>
        <authorList>
            <person name="Church D.M."/>
            <person name="Goodstadt L."/>
            <person name="Hillier L.W."/>
            <person name="Zody M.C."/>
            <person name="Goldstein S."/>
            <person name="She X."/>
            <person name="Bult C.J."/>
            <person name="Agarwala R."/>
            <person name="Cherry J.L."/>
            <person name="DiCuccio M."/>
            <person name="Hlavina W."/>
            <person name="Kapustin Y."/>
            <person name="Meric P."/>
            <person name="Maglott D."/>
            <person name="Birtle Z."/>
            <person name="Marques A.C."/>
            <person name="Graves T."/>
            <person name="Zhou S."/>
            <person name="Teague B."/>
            <person name="Potamousis K."/>
            <person name="Churas C."/>
            <person name="Place M."/>
            <person name="Herschleb J."/>
            <person name="Runnheim R."/>
            <person name="Forrest D."/>
            <person name="Amos-Landgraf J."/>
            <person name="Schwartz D.C."/>
            <person name="Cheng Z."/>
            <person name="Lindblad-Toh K."/>
            <person name="Eichler E.E."/>
            <person name="Ponting C.P."/>
        </authorList>
    </citation>
    <scope>NUCLEOTIDE SEQUENCE [LARGE SCALE GENOMIC DNA]</scope>
    <source>
        <strain>C57BL/6J</strain>
    </source>
</reference>
<reference key="2">
    <citation type="journal article" date="2003" name="PLoS Biol.">
        <title>Transcriptome analysis of mouse stem cells and early embryos.</title>
        <authorList>
            <person name="Sharov A.A."/>
            <person name="Piao Y."/>
            <person name="Matoba R."/>
            <person name="Dudekula D.B."/>
            <person name="Qian Y."/>
            <person name="VanBuren V."/>
            <person name="Falco G."/>
            <person name="Martin P.R."/>
            <person name="Stagg C.A."/>
            <person name="Bassey U.C."/>
            <person name="Wang Y."/>
            <person name="Carter M.G."/>
            <person name="Hamatani T."/>
            <person name="Aiba K."/>
            <person name="Akutsu H."/>
            <person name="Sharova L."/>
            <person name="Tanaka T.S."/>
            <person name="Kimber W.L."/>
            <person name="Yoshikawa T."/>
            <person name="Jaradat S.A."/>
            <person name="Pantano S."/>
            <person name="Nagaraja R."/>
            <person name="Boheler K.R."/>
            <person name="Taub D."/>
            <person name="Hodes R.J."/>
            <person name="Longo D.L."/>
            <person name="Schlessinger D."/>
            <person name="Keller J."/>
            <person name="Klotz E."/>
            <person name="Kelsoe G."/>
            <person name="Umezawa A."/>
            <person name="Vescovi A.L."/>
            <person name="Rossant J."/>
            <person name="Kunath T."/>
            <person name="Hogan B.L.M."/>
            <person name="Curci A."/>
            <person name="D'Urso M."/>
            <person name="Kelso J."/>
            <person name="Hide W."/>
            <person name="Ko M.S.H."/>
        </authorList>
    </citation>
    <scope>NUCLEOTIDE SEQUENCE [LARGE SCALE MRNA] OF 936-1136</scope>
    <source>
        <strain>C57BL/6J</strain>
    </source>
</reference>
<reference key="3">
    <citation type="journal article" date="2010" name="Cell">
        <title>A tissue-specific atlas of mouse protein phosphorylation and expression.</title>
        <authorList>
            <person name="Huttlin E.L."/>
            <person name="Jedrychowski M.P."/>
            <person name="Elias J.E."/>
            <person name="Goswami T."/>
            <person name="Rad R."/>
            <person name="Beausoleil S.A."/>
            <person name="Villen J."/>
            <person name="Haas W."/>
            <person name="Sowa M.E."/>
            <person name="Gygi S.P."/>
        </authorList>
    </citation>
    <scope>PHOSPHORYLATION [LARGE SCALE ANALYSIS] AT SER-499; SER-575; SER-690; SER-1048 AND SER-1208</scope>
    <scope>IDENTIFICATION BY MASS SPECTROMETRY [LARGE SCALE ANALYSIS]</scope>
    <source>
        <tissue>Brain</tissue>
        <tissue>Kidney</tissue>
        <tissue>Lung</tissue>
        <tissue>Pancreas</tissue>
        <tissue>Spleen</tissue>
    </source>
</reference>
<keyword id="KW-0597">Phosphoprotein</keyword>
<keyword id="KW-1185">Reference proteome</keyword>
<sequence length="1219" mass="132353">MPFYRRTVVPQRLCPRNPPQPLAELRDVSHLAALSLLRQLADLCGHSLALLEDLEGHLLALGRRTDSLYRRTVRLRRRLPCRLLGPEDDEELLAAANSGRENATATAHSRSSWRQPVNVFLSSGRPPSVEELLREAQLNLQSLLQEEYEEQYSEARLLGQTFRSSDGAPEPTPSPRPQSAKRLEFVLMPAKRQLSEDETTTQGVRAPEACLSLSTANKQSAWNDPFPLPILKERLWLQPCSTQSDLVPINISGQQFDRHASFRHSLFNTETAVNPKSTLRRRRTIIGFSNFSQRDQGHSSSPTGSLARSATSDIRPGHSAPQVVQGRVAVGQEARFPSLTSPGLRHSSSEPGDAHQARSASDHPGMESMAVVYSVPSSCNGPTESTFSTSWKGDAFTYMTPSASSQGNQVSENGKNPSSGNSWVPLNTLPPLVPKEAATLFVTRDNPAGCTGLPSYSEHPTLRRQIPERPPKIGLLARGTSRLETGPGGTNRFRERSLSVPTDSGVTSVDYDEEQKTSETRILPYASTSSEGSNSTDNIAALSTEQEARHRRQRSKSISLKKAKKKPSPPMRSVSLVKDEPALPPEGELVLPKDQRPRSLCLSLEHQGHHPPHPDAQGHPAVPMLKDPGSTQFSHHWYLTDWKSGDTYQSLSSSSTATGTTVIECTQVQGSSESLASPSTSRATTPSQLSIEVEAREVASPGRPTGLMSPSSGYSSQSETPTPTVSMSLTLGHLPPPSASVRVRPVVPERKSSLPPTSPMEKICKSRLSFDLPLTSSTTLDLSGMSISIRSKTKVSRHHSDTNFGVKLAQKTSPNQPIMPMVTQSDLRSVRLRSVSKSEPEDDIESPDYIEEPGAEEVFTMPERKVKPPIAEKPPLARRPPSLVHRPPSLPGEYPLTSPTMAMASRSSIPHMKQLPQDSYTVLRKPKSPSFPGESTASSSLVLSPLASSSGAFFSGTQQPPQASVEDGGPKVRALPERIGLQSQEEAEKKMTKIPPPVPKKPSVLYLPLTSPVAQMDACMAEPRLPFSPIITLEEDGKCPSTGDDQKSPGKGVTSPLHTDTEKEAISPGRSVEPSAEEKSLISDKTAEWIAEEEDDVFVASRTTEDLFTVIHRSKRKLLGWKETGEGFTGSKPSSHSPVKNTADSPTGEAAAAPGPSSSACLDAGRNDDFKALLQKKGSKATPRTRPSAAELLKTTNPLARRIIAQFSKDYEPTDNPST</sequence>
<evidence type="ECO:0000256" key="1">
    <source>
        <dbReference type="SAM" id="MobiDB-lite"/>
    </source>
</evidence>
<evidence type="ECO:0000305" key="2"/>
<evidence type="ECO:0000312" key="3">
    <source>
        <dbReference type="MGI" id="MGI:3645090"/>
    </source>
</evidence>
<evidence type="ECO:0007744" key="4">
    <source>
    </source>
</evidence>
<name>NHSL2_MOUSE</name>
<protein>
    <recommendedName>
        <fullName evidence="2">NHS-like protein 2</fullName>
    </recommendedName>
</protein>
<comment type="similarity">
    <text evidence="2">Belongs to the NHS family.</text>
</comment>